<feature type="initiator methionine" description="Removed" evidence="3">
    <location>
        <position position="1"/>
    </location>
</feature>
<feature type="chain" id="PRO_0000337006" description="Mitoregulin">
    <location>
        <begin position="2"/>
        <end position="56"/>
    </location>
</feature>
<feature type="topological domain" description="Mitochondrial matrix" evidence="1">
    <location>
        <begin position="2"/>
        <end position="9"/>
    </location>
</feature>
<feature type="transmembrane region" description="Helical" evidence="2">
    <location>
        <begin position="10"/>
        <end position="27"/>
    </location>
</feature>
<feature type="topological domain" description="Mitochondrial intermembrane" evidence="1">
    <location>
        <begin position="28"/>
        <end position="56"/>
    </location>
</feature>
<feature type="splice variant" id="VSP_059832" description="In isoform Long." evidence="7">
    <original>M</original>
    <variation>MLANDVRHQQEMWGFRKVEGGVVQSLGKSSVEGETDGTISEFREIQRLAAFASFLSHAPPLNARRLLTPPPRRRPRCTPAAAM</variation>
    <location>
        <position position="1"/>
    </location>
</feature>
<dbReference type="EMBL" id="AF504645">
    <property type="protein sequence ID" value="AAM28196.1"/>
    <property type="molecule type" value="mRNA"/>
</dbReference>
<dbReference type="EMBL" id="CH878608">
    <property type="protein sequence ID" value="EAW50629.1"/>
    <property type="molecule type" value="Genomic_DNA"/>
</dbReference>
<dbReference type="CCDS" id="CCDS92837.1">
    <molecule id="Q8NCU8-2"/>
</dbReference>
<dbReference type="RefSeq" id="NP_001371063.1">
    <molecule id="Q8NCU8-2"/>
    <property type="nucleotide sequence ID" value="NM_001384134.1"/>
</dbReference>
<dbReference type="SMR" id="Q8NCU8"/>
<dbReference type="FunCoup" id="Q8NCU8">
    <property type="interactions" value="176"/>
</dbReference>
<dbReference type="STRING" id="9606.ENSP00000485216"/>
<dbReference type="iPTMnet" id="Q8NCU8"/>
<dbReference type="PhosphoSitePlus" id="Q8NCU8"/>
<dbReference type="BioMuta" id="LINC00116"/>
<dbReference type="jPOST" id="Q8NCU8"/>
<dbReference type="MassIVE" id="Q8NCU8"/>
<dbReference type="PaxDb" id="9606-ENSP00000485216"/>
<dbReference type="PeptideAtlas" id="Q8NCU8"/>
<dbReference type="ProteomicsDB" id="72950">
    <molecule id="Q8NCU8-1"/>
</dbReference>
<dbReference type="TopDownProteomics" id="Q8NCU8-1">
    <molecule id="Q8NCU8-1"/>
</dbReference>
<dbReference type="Antibodypedia" id="82231">
    <property type="antibodies" value="1 antibodies from 1 providers"/>
</dbReference>
<dbReference type="Ensembl" id="ENST00000414416.2">
    <molecule id="Q8NCU8-1"/>
    <property type="protein sequence ID" value="ENSP00000485216.1"/>
    <property type="gene ID" value="ENSG00000175701.11"/>
</dbReference>
<dbReference type="Ensembl" id="ENST00000426713.1">
    <molecule id="Q8NCU8-2"/>
    <property type="protein sequence ID" value="ENSP00000485373.1"/>
    <property type="gene ID" value="ENSG00000175701.11"/>
</dbReference>
<dbReference type="Ensembl" id="ENST00000611969.5">
    <molecule id="Q8NCU8-2"/>
    <property type="protein sequence ID" value="ENSP00000485064.1"/>
    <property type="gene ID" value="ENSG00000175701.11"/>
</dbReference>
<dbReference type="GeneID" id="205251"/>
<dbReference type="MANE-Select" id="ENST00000611969.5">
    <property type="protein sequence ID" value="ENSP00000485064.1"/>
    <property type="RefSeq nucleotide sequence ID" value="NM_001384134.1"/>
    <property type="RefSeq protein sequence ID" value="NP_001371063.1"/>
</dbReference>
<dbReference type="UCSC" id="uc002tfq.3">
    <molecule id="Q8NCU8-2"/>
    <property type="organism name" value="human"/>
</dbReference>
<dbReference type="AGR" id="HGNC:27339"/>
<dbReference type="GeneCards" id="MTLN"/>
<dbReference type="HGNC" id="HGNC:27339">
    <property type="gene designation" value="MTLN"/>
</dbReference>
<dbReference type="HPA" id="ENSG00000175701">
    <property type="expression patterns" value="Group enriched (heart muscle, skeletal muscle, tongue)"/>
</dbReference>
<dbReference type="MIM" id="620770">
    <property type="type" value="gene"/>
</dbReference>
<dbReference type="neXtProt" id="NX_Q8NCU8"/>
<dbReference type="OpenTargets" id="ENSG00000175701"/>
<dbReference type="VEuPathDB" id="HostDB:ENSG00000175701"/>
<dbReference type="eggNOG" id="ENOG502S9AW">
    <property type="taxonomic scope" value="Eukaryota"/>
</dbReference>
<dbReference type="GeneTree" id="ENSGT00390000007551"/>
<dbReference type="HOGENOM" id="CLU_1921930_0_0_1"/>
<dbReference type="InParanoid" id="Q8NCU8"/>
<dbReference type="OMA" id="VRHQQEM"/>
<dbReference type="OrthoDB" id="8634727at2759"/>
<dbReference type="PAN-GO" id="Q8NCU8">
    <property type="GO annotations" value="3 GO annotations based on evolutionary models"/>
</dbReference>
<dbReference type="PhylomeDB" id="Q8NCU8"/>
<dbReference type="SignaLink" id="Q8NCU8"/>
<dbReference type="ChiTaRS" id="LINC00116">
    <property type="organism name" value="human"/>
</dbReference>
<dbReference type="Pharos" id="Q8NCU8">
    <property type="development level" value="Tbio"/>
</dbReference>
<dbReference type="PRO" id="PR:Q8NCU8"/>
<dbReference type="Proteomes" id="UP000005640">
    <property type="component" value="Chromosome 2"/>
</dbReference>
<dbReference type="RNAct" id="Q8NCU8">
    <property type="molecule type" value="protein"/>
</dbReference>
<dbReference type="Bgee" id="ENSG00000175701">
    <property type="expression patterns" value="Expressed in hindlimb stylopod muscle and 169 other cell types or tissues"/>
</dbReference>
<dbReference type="ExpressionAtlas" id="Q8NCU8">
    <property type="expression patterns" value="baseline and differential"/>
</dbReference>
<dbReference type="GO" id="GO:0005743">
    <property type="term" value="C:mitochondrial inner membrane"/>
    <property type="evidence" value="ECO:0000250"/>
    <property type="project" value="UniProtKB"/>
</dbReference>
<dbReference type="GO" id="GO:0005739">
    <property type="term" value="C:mitochondrion"/>
    <property type="evidence" value="ECO:0000314"/>
    <property type="project" value="UniProtKB"/>
</dbReference>
<dbReference type="GO" id="GO:0045333">
    <property type="term" value="P:cellular respiration"/>
    <property type="evidence" value="ECO:0000250"/>
    <property type="project" value="UniProtKB"/>
</dbReference>
<dbReference type="GO" id="GO:0006635">
    <property type="term" value="P:fatty acid beta-oxidation"/>
    <property type="evidence" value="ECO:0000315"/>
    <property type="project" value="UniProtKB"/>
</dbReference>
<dbReference type="GO" id="GO:0006629">
    <property type="term" value="P:lipid metabolic process"/>
    <property type="evidence" value="ECO:0000250"/>
    <property type="project" value="UniProtKB"/>
</dbReference>
<dbReference type="GO" id="GO:0032000">
    <property type="term" value="P:positive regulation of fatty acid beta-oxidation"/>
    <property type="evidence" value="ECO:0000250"/>
    <property type="project" value="UniProtKB"/>
</dbReference>
<dbReference type="GO" id="GO:0010918">
    <property type="term" value="P:positive regulation of mitochondrial membrane potential"/>
    <property type="evidence" value="ECO:0000314"/>
    <property type="project" value="UniProtKB"/>
</dbReference>
<dbReference type="GO" id="GO:0031334">
    <property type="term" value="P:positive regulation of protein-containing complex assembly"/>
    <property type="evidence" value="ECO:0000250"/>
    <property type="project" value="UniProtKB"/>
</dbReference>
<dbReference type="GO" id="GO:0051284">
    <property type="term" value="P:positive regulation of sequestering of calcium ion"/>
    <property type="evidence" value="ECO:0000314"/>
    <property type="project" value="UniProtKB"/>
</dbReference>
<dbReference type="GO" id="GO:0051146">
    <property type="term" value="P:striated muscle cell differentiation"/>
    <property type="evidence" value="ECO:0000250"/>
    <property type="project" value="UniProtKB"/>
</dbReference>
<dbReference type="GO" id="GO:0070328">
    <property type="term" value="P:triglyceride homeostasis"/>
    <property type="evidence" value="ECO:0000315"/>
    <property type="project" value="UniProtKB"/>
</dbReference>
<dbReference type="InterPro" id="IPR038778">
    <property type="entry name" value="Mtln"/>
</dbReference>
<dbReference type="PANTHER" id="PTHR37154">
    <property type="entry name" value="MITOREGULIN"/>
    <property type="match status" value="1"/>
</dbReference>
<dbReference type="PANTHER" id="PTHR37154:SF1">
    <property type="entry name" value="MITOREGULIN"/>
    <property type="match status" value="1"/>
</dbReference>
<dbReference type="Pfam" id="PF22002">
    <property type="entry name" value="MTLN"/>
    <property type="match status" value="1"/>
</dbReference>
<gene>
    <name evidence="6 8" type="primary">MTLN</name>
    <name evidence="1" type="synonym">LEMP</name>
    <name evidence="8" type="synonym">LINC00116</name>
    <name evidence="1" type="synonym">MOXI</name>
    <name evidence="1" type="synonym">MPM</name>
    <name evidence="8" type="synonym">NCRNA00116</name>
    <name evidence="8" type="synonym">SMIM37</name>
</gene>
<evidence type="ECO:0000250" key="1">
    <source>
        <dbReference type="UniProtKB" id="Q8BT35"/>
    </source>
</evidence>
<evidence type="ECO:0000255" key="2"/>
<evidence type="ECO:0000269" key="3">
    <source>
    </source>
</evidence>
<evidence type="ECO:0000269" key="4">
    <source>
    </source>
</evidence>
<evidence type="ECO:0000269" key="5">
    <source>
    </source>
</evidence>
<evidence type="ECO:0000303" key="6">
    <source>
    </source>
</evidence>
<evidence type="ECO:0000305" key="7"/>
<evidence type="ECO:0000312" key="8">
    <source>
        <dbReference type="HGNC" id="HGNC:27339"/>
    </source>
</evidence>
<accession>Q8NCU8</accession>
<keyword id="KW-0024">Alternative initiation</keyword>
<keyword id="KW-0472">Membrane</keyword>
<keyword id="KW-0496">Mitochondrion</keyword>
<keyword id="KW-0999">Mitochondrion inner membrane</keyword>
<keyword id="KW-1267">Proteomics identification</keyword>
<keyword id="KW-1185">Reference proteome</keyword>
<keyword id="KW-0812">Transmembrane</keyword>
<keyword id="KW-1133">Transmembrane helix</keyword>
<reference key="1">
    <citation type="submission" date="2002-04" db="EMBL/GenBank/DDBJ databases">
        <authorList>
            <person name="Guo J.H."/>
            <person name="Yu L."/>
        </authorList>
    </citation>
    <scope>NUCLEOTIDE SEQUENCE [LARGE SCALE MRNA] (ISOFORM LONG)</scope>
    <source>
        <tissue>Eye</tissue>
    </source>
</reference>
<reference key="2">
    <citation type="submission" date="2005-07" db="EMBL/GenBank/DDBJ databases">
        <authorList>
            <person name="Mural R.J."/>
            <person name="Istrail S."/>
            <person name="Sutton G.G."/>
            <person name="Florea L."/>
            <person name="Halpern A.L."/>
            <person name="Mobarry C.M."/>
            <person name="Lippert R."/>
            <person name="Walenz B."/>
            <person name="Shatkay H."/>
            <person name="Dew I."/>
            <person name="Miller J.R."/>
            <person name="Flanigan M.J."/>
            <person name="Edwards N.J."/>
            <person name="Bolanos R."/>
            <person name="Fasulo D."/>
            <person name="Halldorsson B.V."/>
            <person name="Hannenhalli S."/>
            <person name="Turner R."/>
            <person name="Yooseph S."/>
            <person name="Lu F."/>
            <person name="Nusskern D.R."/>
            <person name="Shue B.C."/>
            <person name="Zheng X.H."/>
            <person name="Zhong F."/>
            <person name="Delcher A.L."/>
            <person name="Huson D.H."/>
            <person name="Kravitz S.A."/>
            <person name="Mouchard L."/>
            <person name="Reinert K."/>
            <person name="Remington K.A."/>
            <person name="Clark A.G."/>
            <person name="Waterman M.S."/>
            <person name="Eichler E.E."/>
            <person name="Adams M.D."/>
            <person name="Hunkapiller M.W."/>
            <person name="Myers E.W."/>
            <person name="Venter J.C."/>
        </authorList>
    </citation>
    <scope>NUCLEOTIDE SEQUENCE [LARGE SCALE GENOMIC DNA]</scope>
</reference>
<reference key="3">
    <citation type="journal article" date="2013" name="Anal. Chem.">
        <title>Top down proteomics of human membrane proteins from enriched mitochondrial fractions.</title>
        <authorList>
            <person name="Catherman A.D."/>
            <person name="Li M."/>
            <person name="Tran J.C."/>
            <person name="Durbin K.R."/>
            <person name="Compton P.D."/>
            <person name="Early B.P."/>
            <person name="Thomas P.M."/>
            <person name="Kelleher N.L."/>
        </authorList>
    </citation>
    <scope>MASS SPECTROMETRY</scope>
    <scope>CLEAVAGE OF INITIATOR METHIONINE (ISOFORM SHORT)</scope>
</reference>
<reference key="4">
    <citation type="journal article" date="2015" name="Proteomics">
        <title>N-terminome analysis of the human mitochondrial proteome.</title>
        <authorList>
            <person name="Vaca Jacome A.S."/>
            <person name="Rabilloud T."/>
            <person name="Schaeffer-Reiss C."/>
            <person name="Rompais M."/>
            <person name="Ayoub D."/>
            <person name="Lane L."/>
            <person name="Bairoch A."/>
            <person name="Van Dorsselaer A."/>
            <person name="Carapito C."/>
        </authorList>
    </citation>
    <scope>IDENTIFICATION BY MASS SPECTROMETRY [LARGE SCALE ANALYSIS]</scope>
</reference>
<reference key="5">
    <citation type="journal article" date="2018" name="Cell Rep.">
        <title>Mitoregulin: a lncRNA-encoded microprotein that supports mitochondrial supercomplexes and respiratory efficiency.</title>
        <authorList>
            <person name="Stein C.S."/>
            <person name="Jadiya P."/>
            <person name="Zhang X."/>
            <person name="McLendon J.M."/>
            <person name="Abouassaly G.M."/>
            <person name="Witmer N.H."/>
            <person name="Anderson E.J."/>
            <person name="Elrod J.W."/>
            <person name="Boudreau R.L."/>
        </authorList>
    </citation>
    <scope>FUNCTION</scope>
</reference>
<reference key="6">
    <citation type="journal article" date="2020" name="Stem Cell Reports">
        <title>Mitoregulin Controls beta-Oxidation in Human and Mouse Adipocytes.</title>
        <authorList>
            <person name="Friesen M."/>
            <person name="Warren C.R."/>
            <person name="Yu H."/>
            <person name="Toyohara T."/>
            <person name="Ding Q."/>
            <person name="Florido M.H.C."/>
            <person name="Sayre C."/>
            <person name="Pope B.D."/>
            <person name="Goff L.A."/>
            <person name="Rinn J.L."/>
            <person name="Cowan C.A."/>
        </authorList>
    </citation>
    <scope>FUNCTION</scope>
    <scope>INTERACTION WITH ATP5B AND HADHB</scope>
    <scope>DEVELOPMENTAL STAGE</scope>
    <scope>IDENTIFICATION BY MASS SPECTROMETRY</scope>
</reference>
<sequence>MADVSERTLQLSVLVAFASGVLLGWQANRLRRRYLDWRKRRLQDKLAATQKKLDLA</sequence>
<proteinExistence type="evidence at protein level"/>
<organism>
    <name type="scientific">Homo sapiens</name>
    <name type="common">Human</name>
    <dbReference type="NCBI Taxonomy" id="9606"/>
    <lineage>
        <taxon>Eukaryota</taxon>
        <taxon>Metazoa</taxon>
        <taxon>Chordata</taxon>
        <taxon>Craniata</taxon>
        <taxon>Vertebrata</taxon>
        <taxon>Euteleostomi</taxon>
        <taxon>Mammalia</taxon>
        <taxon>Eutheria</taxon>
        <taxon>Euarchontoglires</taxon>
        <taxon>Primates</taxon>
        <taxon>Haplorrhini</taxon>
        <taxon>Catarrhini</taxon>
        <taxon>Hominidae</taxon>
        <taxon>Homo</taxon>
    </lineage>
</organism>
<protein>
    <recommendedName>
        <fullName evidence="6 8">Mitoregulin</fullName>
    </recommendedName>
    <alternativeName>
        <fullName evidence="1">Micropeptide in mitochondria</fullName>
    </alternativeName>
    <alternativeName>
        <fullName evidence="1">Micropeptide regulator of beta-oxidation</fullName>
    </alternativeName>
    <alternativeName>
        <fullName evidence="8">Small integral membrane protein 37</fullName>
    </alternativeName>
    <alternativeName>
        <fullName evidence="1">lncRNA-encoded micropeptide</fullName>
    </alternativeName>
</protein>
<name>MTLN_HUMAN</name>
<comment type="function">
    <text evidence="1 4 5">Positively regulates mitochondrial complex assembly and/or stability (By similarity). Increases mitochondrial membrane potential while decreasing mitochondrial reactive oxygen species (PubMed:29949756). Increases mitochondrial respiration rate (PubMed:29949756). Increased mitochondrial respiratory activity promotes myogenic differentiation which facilitates muscle growth and regeneration (By similarity). Increases mitochondrial calcium retention capacity (PubMed:29949756). Plays a role in maintenance of cellular lipid composition through its interaction with cytochrome b5 reductase CYB5R3 which is required for mitochondrial respiratory complex I activity (By similarity). Interacts with the mitochondrial trifunctional enzyme complex (MTE) and enhances fatty acid beta-oxidation (PubMed:32243843). Not required for MTE formation or stability (By similarity). Modulates triglyceride clearance in adipocytes through its role in regulating fatty acid beta-oxidation and lipolysis (PubMed:32243843).</text>
</comment>
<comment type="subunit">
    <text evidence="1 5">Interacts with mitochondrial trifunctional enzyme, a heterotetrameric complex composed of 2 HADHA subunits and 2 HADHB subunits (PubMed:32243843). Interacts with cytochrome b5 reductase CYB5R3; the interaction is required to maintain cellular lipid composition and leads to stimulation of mitochondrial respiratory complex I activity (By similarity). Interacts with ATP synthase subunit ATP5F1B/ATP5B (PubMed:32243843).</text>
</comment>
<comment type="subcellular location">
    <subcellularLocation>
        <location evidence="1">Mitochondrion inner membrane</location>
        <topology evidence="7">Single-pass membrane protein</topology>
    </subcellularLocation>
    <text evidence="1">Preferentially binds to cardiolipin relative to other common cell membrane lipids.</text>
</comment>
<comment type="alternative products">
    <event type="alternative initiation"/>
    <isoform>
        <id>Q8NCU8-2</id>
        <name>Short</name>
        <sequence type="displayed"/>
    </isoform>
    <isoform>
        <id>Q8NCU8-1</id>
        <name>Long</name>
        <sequence type="described" ref="VSP_059832"/>
    </isoform>
</comment>
<comment type="developmental stage">
    <text evidence="5">Levels increase throughout adipogenesis.</text>
</comment>
<comment type="mass spectrometry"/>
<comment type="similarity">
    <text evidence="7">Belongs to the mitoregulin family.</text>
</comment>